<protein>
    <recommendedName>
        <fullName evidence="1">Cell division protein ZapD</fullName>
    </recommendedName>
    <alternativeName>
        <fullName evidence="1">Z ring-associated protein D</fullName>
    </alternativeName>
</protein>
<feature type="chain" id="PRO_0000211676" description="Cell division protein ZapD">
    <location>
        <begin position="1"/>
        <end position="252"/>
    </location>
</feature>
<organism>
    <name type="scientific">Ralstonia nicotianae (strain ATCC BAA-1114 / GMI1000)</name>
    <name type="common">Ralstonia solanacearum</name>
    <dbReference type="NCBI Taxonomy" id="267608"/>
    <lineage>
        <taxon>Bacteria</taxon>
        <taxon>Pseudomonadati</taxon>
        <taxon>Pseudomonadota</taxon>
        <taxon>Betaproteobacteria</taxon>
        <taxon>Burkholderiales</taxon>
        <taxon>Burkholderiaceae</taxon>
        <taxon>Ralstonia</taxon>
        <taxon>Ralstonia solanacearum species complex</taxon>
    </lineage>
</organism>
<keyword id="KW-0131">Cell cycle</keyword>
<keyword id="KW-0132">Cell division</keyword>
<keyword id="KW-0963">Cytoplasm</keyword>
<keyword id="KW-1185">Reference proteome</keyword>
<keyword id="KW-0717">Septation</keyword>
<sequence length="252" mass="28825">MILYEYPFNERIRTLLRLEDLFERLDFFLTQEHPLQHHVALTTLFEIVDVAGRADLKSDLLKELDRQRQTLTVLRSNPQIDQEALDAVIAELETASGNLTATHGKAGQLIADNEWLTSIRSRAIIPGGTCEFDLPAYFAWQHHPGERRRADIVKWAQPLVPLRDATMIVLRLLRESGQSGKVIANAGSYQQMLSGRIYQLMQVRLDDVALGFIPEISANKYMLWVRFTQQDGDLRPKPVDADIPFQLKLCNF</sequence>
<evidence type="ECO:0000255" key="1">
    <source>
        <dbReference type="HAMAP-Rule" id="MF_01092"/>
    </source>
</evidence>
<comment type="function">
    <text evidence="1">Cell division factor that enhances FtsZ-ring assembly. Directly interacts with FtsZ and promotes bundling of FtsZ protofilaments, with a reduction in FtsZ GTPase activity.</text>
</comment>
<comment type="subunit">
    <text evidence="1">Interacts with FtsZ.</text>
</comment>
<comment type="subcellular location">
    <subcellularLocation>
        <location evidence="1">Cytoplasm</location>
    </subcellularLocation>
    <text evidence="1">Localizes to mid-cell in an FtsZ-dependent manner.</text>
</comment>
<comment type="similarity">
    <text evidence="1">Belongs to the ZapD family.</text>
</comment>
<dbReference type="EMBL" id="AL646052">
    <property type="protein sequence ID" value="CAD16536.1"/>
    <property type="molecule type" value="Genomic_DNA"/>
</dbReference>
<dbReference type="RefSeq" id="WP_011002735.1">
    <property type="nucleotide sequence ID" value="NC_003295.1"/>
</dbReference>
<dbReference type="SMR" id="Q8XVK1"/>
<dbReference type="STRING" id="267608.RSc2829"/>
<dbReference type="EnsemblBacteria" id="CAD16536">
    <property type="protein sequence ID" value="CAD16536"/>
    <property type="gene ID" value="RSc2829"/>
</dbReference>
<dbReference type="KEGG" id="rso:RSc2829"/>
<dbReference type="eggNOG" id="COG4582">
    <property type="taxonomic scope" value="Bacteria"/>
</dbReference>
<dbReference type="HOGENOM" id="CLU_076303_0_1_4"/>
<dbReference type="Proteomes" id="UP000001436">
    <property type="component" value="Chromosome"/>
</dbReference>
<dbReference type="GO" id="GO:0032153">
    <property type="term" value="C:cell division site"/>
    <property type="evidence" value="ECO:0007669"/>
    <property type="project" value="TreeGrafter"/>
</dbReference>
<dbReference type="GO" id="GO:0005737">
    <property type="term" value="C:cytoplasm"/>
    <property type="evidence" value="ECO:0007669"/>
    <property type="project" value="UniProtKB-SubCell"/>
</dbReference>
<dbReference type="GO" id="GO:0000917">
    <property type="term" value="P:division septum assembly"/>
    <property type="evidence" value="ECO:0007669"/>
    <property type="project" value="UniProtKB-KW"/>
</dbReference>
<dbReference type="GO" id="GO:0043093">
    <property type="term" value="P:FtsZ-dependent cytokinesis"/>
    <property type="evidence" value="ECO:0007669"/>
    <property type="project" value="UniProtKB-UniRule"/>
</dbReference>
<dbReference type="Gene3D" id="1.10.3900.10">
    <property type="entry name" value="YacF-like"/>
    <property type="match status" value="1"/>
</dbReference>
<dbReference type="Gene3D" id="2.60.440.10">
    <property type="entry name" value="YacF-like domains"/>
    <property type="match status" value="1"/>
</dbReference>
<dbReference type="HAMAP" id="MF_01092">
    <property type="entry name" value="ZapD"/>
    <property type="match status" value="1"/>
</dbReference>
<dbReference type="InterPro" id="IPR009777">
    <property type="entry name" value="ZapD"/>
</dbReference>
<dbReference type="InterPro" id="IPR027462">
    <property type="entry name" value="ZapD_C"/>
</dbReference>
<dbReference type="InterPro" id="IPR036268">
    <property type="entry name" value="ZapD_sf"/>
</dbReference>
<dbReference type="NCBIfam" id="NF003656">
    <property type="entry name" value="PRK05287.1-4"/>
    <property type="match status" value="1"/>
</dbReference>
<dbReference type="PANTHER" id="PTHR39455">
    <property type="entry name" value="CELL DIVISION PROTEIN ZAPD"/>
    <property type="match status" value="1"/>
</dbReference>
<dbReference type="PANTHER" id="PTHR39455:SF1">
    <property type="entry name" value="CELL DIVISION PROTEIN ZAPD"/>
    <property type="match status" value="1"/>
</dbReference>
<dbReference type="Pfam" id="PF07072">
    <property type="entry name" value="ZapD"/>
    <property type="match status" value="1"/>
</dbReference>
<dbReference type="SUPFAM" id="SSF160950">
    <property type="entry name" value="YacF-like"/>
    <property type="match status" value="1"/>
</dbReference>
<proteinExistence type="inferred from homology"/>
<gene>
    <name evidence="1" type="primary">zapD</name>
    <name type="ordered locus">RSc2829</name>
    <name type="ORF">RS00276</name>
</gene>
<name>ZAPD_RALN1</name>
<reference key="1">
    <citation type="journal article" date="2002" name="Nature">
        <title>Genome sequence of the plant pathogen Ralstonia solanacearum.</title>
        <authorList>
            <person name="Salanoubat M."/>
            <person name="Genin S."/>
            <person name="Artiguenave F."/>
            <person name="Gouzy J."/>
            <person name="Mangenot S."/>
            <person name="Arlat M."/>
            <person name="Billault A."/>
            <person name="Brottier P."/>
            <person name="Camus J.-C."/>
            <person name="Cattolico L."/>
            <person name="Chandler M."/>
            <person name="Choisne N."/>
            <person name="Claudel-Renard C."/>
            <person name="Cunnac S."/>
            <person name="Demange N."/>
            <person name="Gaspin C."/>
            <person name="Lavie M."/>
            <person name="Moisan A."/>
            <person name="Robert C."/>
            <person name="Saurin W."/>
            <person name="Schiex T."/>
            <person name="Siguier P."/>
            <person name="Thebault P."/>
            <person name="Whalen M."/>
            <person name="Wincker P."/>
            <person name="Levy M."/>
            <person name="Weissenbach J."/>
            <person name="Boucher C.A."/>
        </authorList>
    </citation>
    <scope>NUCLEOTIDE SEQUENCE [LARGE SCALE GENOMIC DNA]</scope>
    <source>
        <strain>ATCC BAA-1114 / GMI1000</strain>
    </source>
</reference>
<accession>Q8XVK1</accession>